<organism>
    <name type="scientific">Vibrio cholerae serotype O1 (strain ATCC 39541 / Classical Ogawa 395 / O395)</name>
    <dbReference type="NCBI Taxonomy" id="345073"/>
    <lineage>
        <taxon>Bacteria</taxon>
        <taxon>Pseudomonadati</taxon>
        <taxon>Pseudomonadota</taxon>
        <taxon>Gammaproteobacteria</taxon>
        <taxon>Vibrionales</taxon>
        <taxon>Vibrionaceae</taxon>
        <taxon>Vibrio</taxon>
    </lineage>
</organism>
<name>LPLA_VIBC3</name>
<dbReference type="EC" id="6.3.1.20" evidence="1"/>
<dbReference type="EMBL" id="CP000627">
    <property type="protein sequence ID" value="ABQ20166.1"/>
    <property type="molecule type" value="Genomic_DNA"/>
</dbReference>
<dbReference type="EMBL" id="CP001235">
    <property type="protein sequence ID" value="ACP09513.1"/>
    <property type="molecule type" value="Genomic_DNA"/>
</dbReference>
<dbReference type="RefSeq" id="WP_000169395.1">
    <property type="nucleotide sequence ID" value="NZ_JAACZH010000002.1"/>
</dbReference>
<dbReference type="SMR" id="A5F8E4"/>
<dbReference type="KEGG" id="vco:VC0395_A1000"/>
<dbReference type="KEGG" id="vcr:VC395_1507"/>
<dbReference type="PATRIC" id="fig|345073.21.peg.1459"/>
<dbReference type="eggNOG" id="COG0095">
    <property type="taxonomic scope" value="Bacteria"/>
</dbReference>
<dbReference type="HOGENOM" id="CLU_022986_0_1_6"/>
<dbReference type="OrthoDB" id="9787898at2"/>
<dbReference type="UniPathway" id="UPA00537">
    <property type="reaction ID" value="UER00594"/>
</dbReference>
<dbReference type="UniPathway" id="UPA00537">
    <property type="reaction ID" value="UER00595"/>
</dbReference>
<dbReference type="Proteomes" id="UP000000249">
    <property type="component" value="Chromosome 2"/>
</dbReference>
<dbReference type="GO" id="GO:0005829">
    <property type="term" value="C:cytosol"/>
    <property type="evidence" value="ECO:0007669"/>
    <property type="project" value="TreeGrafter"/>
</dbReference>
<dbReference type="GO" id="GO:0005524">
    <property type="term" value="F:ATP binding"/>
    <property type="evidence" value="ECO:0007669"/>
    <property type="project" value="UniProtKB-KW"/>
</dbReference>
<dbReference type="GO" id="GO:0016979">
    <property type="term" value="F:lipoate-protein ligase activity"/>
    <property type="evidence" value="ECO:0007669"/>
    <property type="project" value="UniProtKB-UniRule"/>
</dbReference>
<dbReference type="GO" id="GO:0017118">
    <property type="term" value="F:lipoyltransferase activity"/>
    <property type="evidence" value="ECO:0007669"/>
    <property type="project" value="TreeGrafter"/>
</dbReference>
<dbReference type="GO" id="GO:0036211">
    <property type="term" value="P:protein modification process"/>
    <property type="evidence" value="ECO:0007669"/>
    <property type="project" value="InterPro"/>
</dbReference>
<dbReference type="CDD" id="cd16443">
    <property type="entry name" value="LplA"/>
    <property type="match status" value="1"/>
</dbReference>
<dbReference type="FunFam" id="3.30.930.10:FF:000024">
    <property type="entry name" value="Lipoate-protein ligase A"/>
    <property type="match status" value="1"/>
</dbReference>
<dbReference type="Gene3D" id="3.30.930.10">
    <property type="entry name" value="Bira Bifunctional Protein, Domain 2"/>
    <property type="match status" value="1"/>
</dbReference>
<dbReference type="Gene3D" id="3.30.390.50">
    <property type="entry name" value="CO dehydrogenase flavoprotein, C-terminal domain"/>
    <property type="match status" value="1"/>
</dbReference>
<dbReference type="HAMAP" id="MF_01602">
    <property type="entry name" value="LplA"/>
    <property type="match status" value="1"/>
</dbReference>
<dbReference type="InterPro" id="IPR045864">
    <property type="entry name" value="aa-tRNA-synth_II/BPL/LPL"/>
</dbReference>
<dbReference type="InterPro" id="IPR004143">
    <property type="entry name" value="BPL_LPL_catalytic"/>
</dbReference>
<dbReference type="InterPro" id="IPR023741">
    <property type="entry name" value="Lipoate_ligase_A"/>
</dbReference>
<dbReference type="InterPro" id="IPR019491">
    <property type="entry name" value="Lipoate_protein_ligase_C"/>
</dbReference>
<dbReference type="InterPro" id="IPR004562">
    <property type="entry name" value="LipoylTrfase_LipoateP_Ligase"/>
</dbReference>
<dbReference type="NCBIfam" id="TIGR00545">
    <property type="entry name" value="lipoyltrans"/>
    <property type="match status" value="1"/>
</dbReference>
<dbReference type="PANTHER" id="PTHR12561">
    <property type="entry name" value="LIPOATE-PROTEIN LIGASE"/>
    <property type="match status" value="1"/>
</dbReference>
<dbReference type="PANTHER" id="PTHR12561:SF3">
    <property type="entry name" value="LIPOYLTRANSFERASE 1, MITOCHONDRIAL"/>
    <property type="match status" value="1"/>
</dbReference>
<dbReference type="Pfam" id="PF10437">
    <property type="entry name" value="Lip_prot_lig_C"/>
    <property type="match status" value="1"/>
</dbReference>
<dbReference type="Pfam" id="PF21948">
    <property type="entry name" value="LplA-B_cat"/>
    <property type="match status" value="1"/>
</dbReference>
<dbReference type="SUPFAM" id="SSF55681">
    <property type="entry name" value="Class II aaRS and biotin synthetases"/>
    <property type="match status" value="1"/>
</dbReference>
<dbReference type="SUPFAM" id="SSF82649">
    <property type="entry name" value="SufE/NifU"/>
    <property type="match status" value="1"/>
</dbReference>
<dbReference type="PROSITE" id="PS51733">
    <property type="entry name" value="BPL_LPL_CATALYTIC"/>
    <property type="match status" value="1"/>
</dbReference>
<protein>
    <recommendedName>
        <fullName evidence="1">Lipoate-protein ligase A</fullName>
        <ecNumber evidence="1">6.3.1.20</ecNumber>
    </recommendedName>
    <alternativeName>
        <fullName evidence="1">Lipoate--protein ligase</fullName>
    </alternativeName>
</protein>
<feature type="chain" id="PRO_1000073623" description="Lipoate-protein ligase A">
    <location>
        <begin position="1"/>
        <end position="338"/>
    </location>
</feature>
<feature type="domain" description="BPL/LPL catalytic" evidence="2">
    <location>
        <begin position="29"/>
        <end position="216"/>
    </location>
</feature>
<feature type="binding site" evidence="1">
    <location>
        <position position="71"/>
    </location>
    <ligand>
        <name>ATP</name>
        <dbReference type="ChEBI" id="CHEBI:30616"/>
    </ligand>
</feature>
<feature type="binding site" evidence="1">
    <location>
        <begin position="76"/>
        <end position="79"/>
    </location>
    <ligand>
        <name>ATP</name>
        <dbReference type="ChEBI" id="CHEBI:30616"/>
    </ligand>
</feature>
<feature type="binding site" evidence="1">
    <location>
        <position position="134"/>
    </location>
    <ligand>
        <name>(R)-lipoate</name>
        <dbReference type="ChEBI" id="CHEBI:83088"/>
    </ligand>
</feature>
<feature type="binding site" evidence="1">
    <location>
        <position position="134"/>
    </location>
    <ligand>
        <name>ATP</name>
        <dbReference type="ChEBI" id="CHEBI:30616"/>
    </ligand>
</feature>
<accession>A5F8E4</accession>
<accession>C3M0E7</accession>
<keyword id="KW-0067">ATP-binding</keyword>
<keyword id="KW-0963">Cytoplasm</keyword>
<keyword id="KW-0436">Ligase</keyword>
<keyword id="KW-0547">Nucleotide-binding</keyword>
<sequence>MTKTRILLSDSTDPWFNLAVEDTIFRSMPADQRVLFLWRNADTVVIGRAQNPWRECKTDRMEQDKVKLARRQTGGGAVFHDLGNTNFTFMAGKPEYDKEVSTKIVLAGLQKLGIHGVANGRNDLVLEDEQGIRKFSGSAYRETLDRGFHHGTLLLSADLNRLADYLNPDLKKLQAKGITSVKSRVINLNTVKADIEHQQVCEAIMQAYCEHYQQQVEPELISPQSFFDLPGFEQKFAQQSSWDWNFGQTPPFTHHMDERFSWGGVEVYLEVERGTIVQATIFSDMLDPYPMEQLALRLSGLTYNKTALEPCLAQLMQELPQYQLPLEEFQRWFIDQID</sequence>
<reference key="1">
    <citation type="submission" date="2007-03" db="EMBL/GenBank/DDBJ databases">
        <authorList>
            <person name="Heidelberg J."/>
        </authorList>
    </citation>
    <scope>NUCLEOTIDE SEQUENCE [LARGE SCALE GENOMIC DNA]</scope>
    <source>
        <strain>ATCC 39541 / Classical Ogawa 395 / O395</strain>
    </source>
</reference>
<reference key="2">
    <citation type="journal article" date="2008" name="PLoS ONE">
        <title>A recalibrated molecular clock and independent origins for the cholera pandemic clones.</title>
        <authorList>
            <person name="Feng L."/>
            <person name="Reeves P.R."/>
            <person name="Lan R."/>
            <person name="Ren Y."/>
            <person name="Gao C."/>
            <person name="Zhou Z."/>
            <person name="Ren Y."/>
            <person name="Cheng J."/>
            <person name="Wang W."/>
            <person name="Wang J."/>
            <person name="Qian W."/>
            <person name="Li D."/>
            <person name="Wang L."/>
        </authorList>
    </citation>
    <scope>NUCLEOTIDE SEQUENCE [LARGE SCALE GENOMIC DNA]</scope>
    <source>
        <strain>ATCC 39541 / Classical Ogawa 395 / O395</strain>
    </source>
</reference>
<evidence type="ECO:0000255" key="1">
    <source>
        <dbReference type="HAMAP-Rule" id="MF_01602"/>
    </source>
</evidence>
<evidence type="ECO:0000255" key="2">
    <source>
        <dbReference type="PROSITE-ProRule" id="PRU01067"/>
    </source>
</evidence>
<proteinExistence type="inferred from homology"/>
<comment type="function">
    <text evidence="1">Catalyzes both the ATP-dependent activation of exogenously supplied lipoate to lipoyl-AMP and the transfer of the activated lipoyl onto the lipoyl domains of lipoate-dependent enzymes.</text>
</comment>
<comment type="catalytic activity">
    <reaction evidence="1">
        <text>L-lysyl-[lipoyl-carrier protein] + (R)-lipoate + ATP = N(6)-[(R)-lipoyl]-L-lysyl-[lipoyl-carrier protein] + AMP + diphosphate + H(+)</text>
        <dbReference type="Rhea" id="RHEA:49288"/>
        <dbReference type="Rhea" id="RHEA-COMP:10500"/>
        <dbReference type="Rhea" id="RHEA-COMP:10502"/>
        <dbReference type="ChEBI" id="CHEBI:15378"/>
        <dbReference type="ChEBI" id="CHEBI:29969"/>
        <dbReference type="ChEBI" id="CHEBI:30616"/>
        <dbReference type="ChEBI" id="CHEBI:33019"/>
        <dbReference type="ChEBI" id="CHEBI:83088"/>
        <dbReference type="ChEBI" id="CHEBI:83099"/>
        <dbReference type="ChEBI" id="CHEBI:456215"/>
        <dbReference type="EC" id="6.3.1.20"/>
    </reaction>
</comment>
<comment type="pathway">
    <text evidence="1">Protein modification; protein lipoylation via exogenous pathway; protein N(6)-(lipoyl)lysine from lipoate: step 1/2.</text>
</comment>
<comment type="pathway">
    <text evidence="1">Protein modification; protein lipoylation via exogenous pathway; protein N(6)-(lipoyl)lysine from lipoate: step 2/2.</text>
</comment>
<comment type="subunit">
    <text evidence="1">Monomer.</text>
</comment>
<comment type="subcellular location">
    <subcellularLocation>
        <location evidence="1">Cytoplasm</location>
    </subcellularLocation>
</comment>
<comment type="miscellaneous">
    <text evidence="1">In the transfer reaction, the free carboxyl group of lipoic acid is attached via an amide linkage to the epsilon-amino group of a specific lysine residue of lipoyl domains of lipoate-dependent enzymes.</text>
</comment>
<comment type="similarity">
    <text evidence="1">Belongs to the LplA family.</text>
</comment>
<gene>
    <name evidence="1" type="primary">lplA</name>
    <name type="ordered locus">VC0395_A1000</name>
    <name type="ordered locus">VC395_1507</name>
</gene>